<gene>
    <name evidence="1" type="primary">phnW</name>
    <name type="ordered locus">BCAH820_1415</name>
</gene>
<dbReference type="EC" id="2.6.1.37" evidence="1"/>
<dbReference type="EMBL" id="CP001283">
    <property type="protein sequence ID" value="ACK92164.1"/>
    <property type="molecule type" value="Genomic_DNA"/>
</dbReference>
<dbReference type="RefSeq" id="WP_000138251.1">
    <property type="nucleotide sequence ID" value="NC_011773.1"/>
</dbReference>
<dbReference type="SMR" id="B7JFQ9"/>
<dbReference type="GeneID" id="45021330"/>
<dbReference type="KEGG" id="bcu:BCAH820_1415"/>
<dbReference type="HOGENOM" id="CLU_027686_3_1_9"/>
<dbReference type="Proteomes" id="UP000001363">
    <property type="component" value="Chromosome"/>
</dbReference>
<dbReference type="GO" id="GO:0047304">
    <property type="term" value="F:2-aminoethylphosphonate-pyruvate transaminase activity"/>
    <property type="evidence" value="ECO:0007669"/>
    <property type="project" value="UniProtKB-UniRule"/>
</dbReference>
<dbReference type="GO" id="GO:0019700">
    <property type="term" value="P:organic phosphonate catabolic process"/>
    <property type="evidence" value="ECO:0007669"/>
    <property type="project" value="InterPro"/>
</dbReference>
<dbReference type="Gene3D" id="3.90.1150.10">
    <property type="entry name" value="Aspartate Aminotransferase, domain 1"/>
    <property type="match status" value="1"/>
</dbReference>
<dbReference type="Gene3D" id="3.40.640.10">
    <property type="entry name" value="Type I PLP-dependent aspartate aminotransferase-like (Major domain)"/>
    <property type="match status" value="1"/>
</dbReference>
<dbReference type="HAMAP" id="MF_01376">
    <property type="entry name" value="PhnW_aminotrans_5"/>
    <property type="match status" value="1"/>
</dbReference>
<dbReference type="InterPro" id="IPR000192">
    <property type="entry name" value="Aminotrans_V_dom"/>
</dbReference>
<dbReference type="InterPro" id="IPR012703">
    <property type="entry name" value="NH2EtPonate_pyrv_transaminase"/>
</dbReference>
<dbReference type="InterPro" id="IPR015424">
    <property type="entry name" value="PyrdxlP-dep_Trfase"/>
</dbReference>
<dbReference type="InterPro" id="IPR015421">
    <property type="entry name" value="PyrdxlP-dep_Trfase_major"/>
</dbReference>
<dbReference type="InterPro" id="IPR015422">
    <property type="entry name" value="PyrdxlP-dep_Trfase_small"/>
</dbReference>
<dbReference type="InterPro" id="IPR024169">
    <property type="entry name" value="SP_NH2Trfase/AEP_transaminase"/>
</dbReference>
<dbReference type="NCBIfam" id="TIGR03301">
    <property type="entry name" value="PhnW-AepZ"/>
    <property type="match status" value="1"/>
</dbReference>
<dbReference type="NCBIfam" id="NF010006">
    <property type="entry name" value="PRK13479.1"/>
    <property type="match status" value="1"/>
</dbReference>
<dbReference type="NCBIfam" id="TIGR02326">
    <property type="entry name" value="transamin_PhnW"/>
    <property type="match status" value="1"/>
</dbReference>
<dbReference type="PANTHER" id="PTHR42778">
    <property type="entry name" value="2-AMINOETHYLPHOSPHONATE--PYRUVATE TRANSAMINASE"/>
    <property type="match status" value="1"/>
</dbReference>
<dbReference type="PANTHER" id="PTHR42778:SF1">
    <property type="entry name" value="2-AMINOETHYLPHOSPHONATE--PYRUVATE TRANSAMINASE"/>
    <property type="match status" value="1"/>
</dbReference>
<dbReference type="Pfam" id="PF00266">
    <property type="entry name" value="Aminotran_5"/>
    <property type="match status" value="1"/>
</dbReference>
<dbReference type="PIRSF" id="PIRSF000524">
    <property type="entry name" value="SPT"/>
    <property type="match status" value="1"/>
</dbReference>
<dbReference type="SUPFAM" id="SSF53383">
    <property type="entry name" value="PLP-dependent transferases"/>
    <property type="match status" value="1"/>
</dbReference>
<sequence>MTENHYLLLTPGPLTTTKTVKEVMLYDWCTWDVEYNTMVQKVRAKLVSLATKEEEKYTTVLMQGSGTFSVEAVIGSVIPKNGKLLVCTNGAYGKRIVQMAEMLHIDVVVSQTEEWEPTNIVEVEKILQQDKEITHIAVVHCETTTGIINPIVDVCKLGKQYGKVTLVDAMSSFGGIEIDIAELQIDFLISSANKCIQGVPGFGFVIAQRDELLKCKGQARSLSLDLYDQWETMENQNGKWRFTSPTHVVHAFYQALLELEKEGGVRARYNRYYNNQKLLVNRMGEIGFKPLVNEKYQSPIITSFIYPEGNFEFQQLYNELKRYGFVIYPGKISKVDTFRIGNIGDVHEEDINRLVDSIAKGVVIG</sequence>
<reference key="1">
    <citation type="submission" date="2008-10" db="EMBL/GenBank/DDBJ databases">
        <title>Genome sequence of Bacillus cereus AH820.</title>
        <authorList>
            <person name="Dodson R.J."/>
            <person name="Durkin A.S."/>
            <person name="Rosovitz M.J."/>
            <person name="Rasko D.A."/>
            <person name="Hoffmaster A."/>
            <person name="Ravel J."/>
            <person name="Sutton G."/>
        </authorList>
    </citation>
    <scope>NUCLEOTIDE SEQUENCE [LARGE SCALE GENOMIC DNA]</scope>
    <source>
        <strain>AH820</strain>
    </source>
</reference>
<name>PHNW_BACC0</name>
<comment type="function">
    <text evidence="1">Involved in phosphonate degradation.</text>
</comment>
<comment type="catalytic activity">
    <reaction evidence="1">
        <text>(2-aminoethyl)phosphonate + pyruvate = phosphonoacetaldehyde + L-alanine</text>
        <dbReference type="Rhea" id="RHEA:17021"/>
        <dbReference type="ChEBI" id="CHEBI:15361"/>
        <dbReference type="ChEBI" id="CHEBI:57418"/>
        <dbReference type="ChEBI" id="CHEBI:57972"/>
        <dbReference type="ChEBI" id="CHEBI:58383"/>
        <dbReference type="EC" id="2.6.1.37"/>
    </reaction>
</comment>
<comment type="cofactor">
    <cofactor evidence="1">
        <name>pyridoxal 5'-phosphate</name>
        <dbReference type="ChEBI" id="CHEBI:597326"/>
    </cofactor>
</comment>
<comment type="subunit">
    <text evidence="1">Homodimer.</text>
</comment>
<comment type="similarity">
    <text evidence="1">Belongs to the class-V pyridoxal-phosphate-dependent aminotransferase family. PhnW subfamily.</text>
</comment>
<proteinExistence type="inferred from homology"/>
<feature type="chain" id="PRO_1000144845" description="2-aminoethylphosphonate--pyruvate transaminase">
    <location>
        <begin position="1"/>
        <end position="365"/>
    </location>
</feature>
<feature type="modified residue" description="N6-(pyridoxal phosphate)lysine" evidence="1">
    <location>
        <position position="194"/>
    </location>
</feature>
<protein>
    <recommendedName>
        <fullName evidence="1">2-aminoethylphosphonate--pyruvate transaminase</fullName>
        <ecNumber evidence="1">2.6.1.37</ecNumber>
    </recommendedName>
    <alternativeName>
        <fullName evidence="1">2-aminoethylphosphonate aminotransferase</fullName>
    </alternativeName>
    <alternativeName>
        <fullName evidence="1">AEP transaminase</fullName>
        <shortName evidence="1">AEPT</shortName>
    </alternativeName>
</protein>
<keyword id="KW-0032">Aminotransferase</keyword>
<keyword id="KW-0663">Pyridoxal phosphate</keyword>
<keyword id="KW-0670">Pyruvate</keyword>
<keyword id="KW-0808">Transferase</keyword>
<evidence type="ECO:0000255" key="1">
    <source>
        <dbReference type="HAMAP-Rule" id="MF_01376"/>
    </source>
</evidence>
<accession>B7JFQ9</accession>
<organism>
    <name type="scientific">Bacillus cereus (strain AH820)</name>
    <dbReference type="NCBI Taxonomy" id="405535"/>
    <lineage>
        <taxon>Bacteria</taxon>
        <taxon>Bacillati</taxon>
        <taxon>Bacillota</taxon>
        <taxon>Bacilli</taxon>
        <taxon>Bacillales</taxon>
        <taxon>Bacillaceae</taxon>
        <taxon>Bacillus</taxon>
        <taxon>Bacillus cereus group</taxon>
    </lineage>
</organism>